<organism>
    <name type="scientific">Photorhabdus laumondii subsp. laumondii (strain DSM 15139 / CIP 105565 / TT01)</name>
    <name type="common">Photorhabdus luminescens subsp. laumondii</name>
    <dbReference type="NCBI Taxonomy" id="243265"/>
    <lineage>
        <taxon>Bacteria</taxon>
        <taxon>Pseudomonadati</taxon>
        <taxon>Pseudomonadota</taxon>
        <taxon>Gammaproteobacteria</taxon>
        <taxon>Enterobacterales</taxon>
        <taxon>Morganellaceae</taxon>
        <taxon>Photorhabdus</taxon>
    </lineage>
</organism>
<reference key="1">
    <citation type="journal article" date="2003" name="Nat. Biotechnol.">
        <title>The genome sequence of the entomopathogenic bacterium Photorhabdus luminescens.</title>
        <authorList>
            <person name="Duchaud E."/>
            <person name="Rusniok C."/>
            <person name="Frangeul L."/>
            <person name="Buchrieser C."/>
            <person name="Givaudan A."/>
            <person name="Taourit S."/>
            <person name="Bocs S."/>
            <person name="Boursaux-Eude C."/>
            <person name="Chandler M."/>
            <person name="Charles J.-F."/>
            <person name="Dassa E."/>
            <person name="Derose R."/>
            <person name="Derzelle S."/>
            <person name="Freyssinet G."/>
            <person name="Gaudriault S."/>
            <person name="Medigue C."/>
            <person name="Lanois A."/>
            <person name="Powell K."/>
            <person name="Siguier P."/>
            <person name="Vincent R."/>
            <person name="Wingate V."/>
            <person name="Zouine M."/>
            <person name="Glaser P."/>
            <person name="Boemare N."/>
            <person name="Danchin A."/>
            <person name="Kunst F."/>
        </authorList>
    </citation>
    <scope>NUCLEOTIDE SEQUENCE [LARGE SCALE GENOMIC DNA]</scope>
    <source>
        <strain>DSM 15139 / CIP 105565 / TT01</strain>
    </source>
</reference>
<keyword id="KW-0963">Cytoplasm</keyword>
<keyword id="KW-1185">Reference proteome</keyword>
<keyword id="KW-0808">Transferase</keyword>
<keyword id="KW-0819">tRNA processing</keyword>
<gene>
    <name type="primary">tusE</name>
    <name type="ordered locus">plu1786</name>
</gene>
<protein>
    <recommendedName>
        <fullName>Sulfurtransferase TusE</fullName>
        <ecNumber>2.8.1.-</ecNumber>
    </recommendedName>
    <alternativeName>
        <fullName>tRNA 2-thiouridine synthesizing protein E</fullName>
    </alternativeName>
</protein>
<feature type="chain" id="PRO_0000234613" description="Sulfurtransferase TusE">
    <location>
        <begin position="1"/>
        <end position="111"/>
    </location>
</feature>
<feature type="active site" description="Cysteine persulfide intermediate" evidence="1">
    <location>
        <position position="110"/>
    </location>
</feature>
<accession>Q7N5Z1</accession>
<sequence>MIMLVFEGQEIETDAQGYLKNSSDWEEAIALLLAKQEEITLTEPHWEVIRFIREFYKEFNTSPAIRMLVKAIAQKYGEEKGNSRYLYRLFPKGPAKQATKIAGLPKPVKCI</sequence>
<comment type="function">
    <text evidence="1">Part of a sulfur-relay system required for 2-thiolation of 5-methylaminomethyl-2-thiouridine (mnm(5)s(2)U) at tRNA wobble positions. Could accept sulfur from TusD (By similarity).</text>
</comment>
<comment type="subunit">
    <text evidence="1">Interacts with the TusBCD complex. Interacts with MnmA (By similarity).</text>
</comment>
<comment type="subcellular location">
    <subcellularLocation>
        <location evidence="1">Cytoplasm</location>
    </subcellularLocation>
</comment>
<comment type="similarity">
    <text evidence="2">Belongs to the DsrC/TusE family.</text>
</comment>
<proteinExistence type="inferred from homology"/>
<evidence type="ECO:0000250" key="1"/>
<evidence type="ECO:0000305" key="2"/>
<name>TUSE_PHOLL</name>
<dbReference type="EC" id="2.8.1.-"/>
<dbReference type="EMBL" id="BX571865">
    <property type="protein sequence ID" value="CAE14079.1"/>
    <property type="molecule type" value="Genomic_DNA"/>
</dbReference>
<dbReference type="SMR" id="Q7N5Z1"/>
<dbReference type="STRING" id="243265.plu1786"/>
<dbReference type="KEGG" id="plu:plu1786"/>
<dbReference type="eggNOG" id="COG2920">
    <property type="taxonomic scope" value="Bacteria"/>
</dbReference>
<dbReference type="HOGENOM" id="CLU_153199_1_0_6"/>
<dbReference type="Proteomes" id="UP000002514">
    <property type="component" value="Chromosome"/>
</dbReference>
<dbReference type="GO" id="GO:0005737">
    <property type="term" value="C:cytoplasm"/>
    <property type="evidence" value="ECO:0007669"/>
    <property type="project" value="UniProtKB-SubCell"/>
</dbReference>
<dbReference type="GO" id="GO:0097163">
    <property type="term" value="F:sulfur carrier activity"/>
    <property type="evidence" value="ECO:0007669"/>
    <property type="project" value="TreeGrafter"/>
</dbReference>
<dbReference type="GO" id="GO:0016740">
    <property type="term" value="F:transferase activity"/>
    <property type="evidence" value="ECO:0007669"/>
    <property type="project" value="UniProtKB-KW"/>
</dbReference>
<dbReference type="GO" id="GO:0002143">
    <property type="term" value="P:tRNA wobble position uridine thiolation"/>
    <property type="evidence" value="ECO:0007669"/>
    <property type="project" value="TreeGrafter"/>
</dbReference>
<dbReference type="FunFam" id="1.10.10.370:FF:000001">
    <property type="entry name" value="Sulfurtransferase"/>
    <property type="match status" value="1"/>
</dbReference>
<dbReference type="Gene3D" id="3.30.1420.10">
    <property type="match status" value="1"/>
</dbReference>
<dbReference type="Gene3D" id="1.10.10.370">
    <property type="entry name" value="DsrC-like protein, C-terminal domain"/>
    <property type="match status" value="1"/>
</dbReference>
<dbReference type="InterPro" id="IPR042072">
    <property type="entry name" value="DsrC-like_C"/>
</dbReference>
<dbReference type="InterPro" id="IPR025526">
    <property type="entry name" value="DsrC-like_dom_sf"/>
</dbReference>
<dbReference type="InterPro" id="IPR043163">
    <property type="entry name" value="DsrC-like_N"/>
</dbReference>
<dbReference type="InterPro" id="IPR007453">
    <property type="entry name" value="DsrC/TusE"/>
</dbReference>
<dbReference type="NCBIfam" id="TIGR03342">
    <property type="entry name" value="dsrC_tusE_dsvC"/>
    <property type="match status" value="1"/>
</dbReference>
<dbReference type="NCBIfam" id="NF008562">
    <property type="entry name" value="PRK11508.1"/>
    <property type="match status" value="1"/>
</dbReference>
<dbReference type="PANTHER" id="PTHR37010">
    <property type="entry name" value="SULFURTRANSFERASE TUSE"/>
    <property type="match status" value="1"/>
</dbReference>
<dbReference type="PANTHER" id="PTHR37010:SF1">
    <property type="entry name" value="SULFURTRANSFERASE TUSE"/>
    <property type="match status" value="1"/>
</dbReference>
<dbReference type="Pfam" id="PF04358">
    <property type="entry name" value="DsrC"/>
    <property type="match status" value="1"/>
</dbReference>
<dbReference type="PIRSF" id="PIRSF006223">
    <property type="entry name" value="DsrC_TusE"/>
    <property type="match status" value="1"/>
</dbReference>
<dbReference type="SUPFAM" id="SSF69721">
    <property type="entry name" value="DsrC, the gamma subunit of dissimilatory sulfite reductase"/>
    <property type="match status" value="1"/>
</dbReference>